<feature type="chain" id="PRO_0000102970" description="SsrA-binding protein">
    <location>
        <begin position="1"/>
        <end position="158"/>
    </location>
</feature>
<feature type="region of interest" description="Disordered" evidence="2">
    <location>
        <begin position="133"/>
        <end position="158"/>
    </location>
</feature>
<feature type="compositionally biased region" description="Basic and acidic residues" evidence="2">
    <location>
        <begin position="133"/>
        <end position="147"/>
    </location>
</feature>
<proteinExistence type="inferred from homology"/>
<name>SSRP_LEIXX</name>
<evidence type="ECO:0000255" key="1">
    <source>
        <dbReference type="HAMAP-Rule" id="MF_00023"/>
    </source>
</evidence>
<evidence type="ECO:0000256" key="2">
    <source>
        <dbReference type="SAM" id="MobiDB-lite"/>
    </source>
</evidence>
<keyword id="KW-0963">Cytoplasm</keyword>
<keyword id="KW-1185">Reference proteome</keyword>
<keyword id="KW-0694">RNA-binding</keyword>
<dbReference type="EMBL" id="AE016822">
    <property type="protein sequence ID" value="AAT89179.1"/>
    <property type="molecule type" value="Genomic_DNA"/>
</dbReference>
<dbReference type="RefSeq" id="WP_011186173.1">
    <property type="nucleotide sequence ID" value="NC_006087.1"/>
</dbReference>
<dbReference type="SMR" id="Q6AEL7"/>
<dbReference type="STRING" id="281090.Lxx13490"/>
<dbReference type="KEGG" id="lxx:Lxx13490"/>
<dbReference type="eggNOG" id="COG0691">
    <property type="taxonomic scope" value="Bacteria"/>
</dbReference>
<dbReference type="HOGENOM" id="CLU_108953_2_1_11"/>
<dbReference type="Proteomes" id="UP000001306">
    <property type="component" value="Chromosome"/>
</dbReference>
<dbReference type="GO" id="GO:0005829">
    <property type="term" value="C:cytosol"/>
    <property type="evidence" value="ECO:0007669"/>
    <property type="project" value="TreeGrafter"/>
</dbReference>
<dbReference type="GO" id="GO:0003723">
    <property type="term" value="F:RNA binding"/>
    <property type="evidence" value="ECO:0007669"/>
    <property type="project" value="UniProtKB-UniRule"/>
</dbReference>
<dbReference type="GO" id="GO:0070929">
    <property type="term" value="P:trans-translation"/>
    <property type="evidence" value="ECO:0007669"/>
    <property type="project" value="UniProtKB-UniRule"/>
</dbReference>
<dbReference type="CDD" id="cd09294">
    <property type="entry name" value="SmpB"/>
    <property type="match status" value="1"/>
</dbReference>
<dbReference type="Gene3D" id="2.40.280.10">
    <property type="match status" value="1"/>
</dbReference>
<dbReference type="HAMAP" id="MF_00023">
    <property type="entry name" value="SmpB"/>
    <property type="match status" value="1"/>
</dbReference>
<dbReference type="InterPro" id="IPR023620">
    <property type="entry name" value="SmpB"/>
</dbReference>
<dbReference type="InterPro" id="IPR000037">
    <property type="entry name" value="SsrA-bd_prot"/>
</dbReference>
<dbReference type="InterPro" id="IPR020081">
    <property type="entry name" value="SsrA-bd_prot_CS"/>
</dbReference>
<dbReference type="NCBIfam" id="NF003843">
    <property type="entry name" value="PRK05422.1"/>
    <property type="match status" value="1"/>
</dbReference>
<dbReference type="NCBIfam" id="TIGR00086">
    <property type="entry name" value="smpB"/>
    <property type="match status" value="1"/>
</dbReference>
<dbReference type="PANTHER" id="PTHR30308:SF2">
    <property type="entry name" value="SSRA-BINDING PROTEIN"/>
    <property type="match status" value="1"/>
</dbReference>
<dbReference type="PANTHER" id="PTHR30308">
    <property type="entry name" value="TMRNA-BINDING COMPONENT OF TRANS-TRANSLATION TAGGING COMPLEX"/>
    <property type="match status" value="1"/>
</dbReference>
<dbReference type="Pfam" id="PF01668">
    <property type="entry name" value="SmpB"/>
    <property type="match status" value="1"/>
</dbReference>
<dbReference type="SUPFAM" id="SSF74982">
    <property type="entry name" value="Small protein B (SmpB)"/>
    <property type="match status" value="1"/>
</dbReference>
<dbReference type="PROSITE" id="PS01317">
    <property type="entry name" value="SSRP"/>
    <property type="match status" value="1"/>
</dbReference>
<organism>
    <name type="scientific">Leifsonia xyli subsp. xyli (strain CTCB07)</name>
    <dbReference type="NCBI Taxonomy" id="281090"/>
    <lineage>
        <taxon>Bacteria</taxon>
        <taxon>Bacillati</taxon>
        <taxon>Actinomycetota</taxon>
        <taxon>Actinomycetes</taxon>
        <taxon>Micrococcales</taxon>
        <taxon>Microbacteriaceae</taxon>
        <taxon>Leifsonia</taxon>
    </lineage>
</organism>
<comment type="function">
    <text evidence="1">Required for rescue of stalled ribosomes mediated by trans-translation. Binds to transfer-messenger RNA (tmRNA), required for stable association of tmRNA with ribosomes. tmRNA and SmpB together mimic tRNA shape, replacing the anticodon stem-loop with SmpB. tmRNA is encoded by the ssrA gene; the 2 termini fold to resemble tRNA(Ala) and it encodes a 'tag peptide', a short internal open reading frame. During trans-translation Ala-aminoacylated tmRNA acts like a tRNA, entering the A-site of stalled ribosomes, displacing the stalled mRNA. The ribosome then switches to translate the ORF on the tmRNA; the nascent peptide is terminated with the 'tag peptide' encoded by the tmRNA and targeted for degradation. The ribosome is freed to recommence translation, which seems to be the essential function of trans-translation.</text>
</comment>
<comment type="subcellular location">
    <subcellularLocation>
        <location evidence="1">Cytoplasm</location>
    </subcellularLocation>
    <text evidence="1">The tmRNA-SmpB complex associates with stalled 70S ribosomes.</text>
</comment>
<comment type="similarity">
    <text evidence="1">Belongs to the SmpB family.</text>
</comment>
<accession>Q6AEL7</accession>
<reference key="1">
    <citation type="journal article" date="2004" name="Mol. Plant Microbe Interact.">
        <title>The genome sequence of the Gram-positive sugarcane pathogen Leifsonia xyli subsp. xyli.</title>
        <authorList>
            <person name="Monteiro-Vitorello C.B."/>
            <person name="Camargo L.E.A."/>
            <person name="Van Sluys M.A."/>
            <person name="Kitajima J.P."/>
            <person name="Truffi D."/>
            <person name="do Amaral A.M."/>
            <person name="Harakava R."/>
            <person name="de Oliveira J.C.F."/>
            <person name="Wood D."/>
            <person name="de Oliveira M.C."/>
            <person name="Miyaki C.Y."/>
            <person name="Takita M.A."/>
            <person name="da Silva A.C.R."/>
            <person name="Furlan L.R."/>
            <person name="Carraro D.M."/>
            <person name="Camarotte G."/>
            <person name="Almeida N.F. Jr."/>
            <person name="Carrer H."/>
            <person name="Coutinho L.L."/>
            <person name="El-Dorry H.A."/>
            <person name="Ferro M.I.T."/>
            <person name="Gagliardi P.R."/>
            <person name="Giglioti E."/>
            <person name="Goldman M.H.S."/>
            <person name="Goldman G.H."/>
            <person name="Kimura E.T."/>
            <person name="Ferro E.S."/>
            <person name="Kuramae E.E."/>
            <person name="Lemos E.G.M."/>
            <person name="Lemos M.V.F."/>
            <person name="Mauro S.M.Z."/>
            <person name="Machado M.A."/>
            <person name="Marino C.L."/>
            <person name="Menck C.F."/>
            <person name="Nunes L.R."/>
            <person name="Oliveira R.C."/>
            <person name="Pereira G.G."/>
            <person name="Siqueira W."/>
            <person name="de Souza A.A."/>
            <person name="Tsai S.M."/>
            <person name="Zanca A.S."/>
            <person name="Simpson A.J.G."/>
            <person name="Brumbley S.M."/>
            <person name="Setubal J.C."/>
        </authorList>
    </citation>
    <scope>NUCLEOTIDE SEQUENCE [LARGE SCALE GENOMIC DNA]</scope>
    <source>
        <strain>CTCB07</strain>
    </source>
</reference>
<protein>
    <recommendedName>
        <fullName evidence="1">SsrA-binding protein</fullName>
    </recommendedName>
    <alternativeName>
        <fullName evidence="1">Small protein B</fullName>
    </alternativeName>
</protein>
<gene>
    <name evidence="1" type="primary">smpB</name>
    <name type="ordered locus">Lxx13490</name>
</gene>
<sequence>MAKERGQKVVATNRRARHDYTIEDTYEAGLVLTGTEVKSLRLGRASLVDGYAFVDGGEAWLDAVHIPEYADGTWNNHAPRRKRKLLLHKAQILKIESKVKQGGYTIVPLQIYFNDGRAKVEIGVAKGKREYDKRQALRERQDNREAQRAMASRKHLGE</sequence>